<name>IHFB_BRUA2</name>
<protein>
    <recommendedName>
        <fullName evidence="1">Integration host factor subunit beta</fullName>
        <shortName evidence="1">IHF-beta</shortName>
    </recommendedName>
</protein>
<proteinExistence type="inferred from homology"/>
<accession>Q2YP18</accession>
<gene>
    <name evidence="1" type="primary">ihfB</name>
    <name evidence="1" type="synonym">himD</name>
    <name type="ordered locus">BAB1_0152</name>
</gene>
<organism>
    <name type="scientific">Brucella abortus (strain 2308)</name>
    <dbReference type="NCBI Taxonomy" id="359391"/>
    <lineage>
        <taxon>Bacteria</taxon>
        <taxon>Pseudomonadati</taxon>
        <taxon>Pseudomonadota</taxon>
        <taxon>Alphaproteobacteria</taxon>
        <taxon>Hyphomicrobiales</taxon>
        <taxon>Brucellaceae</taxon>
        <taxon>Brucella/Ochrobactrum group</taxon>
        <taxon>Brucella</taxon>
    </lineage>
</organism>
<dbReference type="EMBL" id="AM040264">
    <property type="protein sequence ID" value="CAJ10108.1"/>
    <property type="molecule type" value="Genomic_DNA"/>
</dbReference>
<dbReference type="RefSeq" id="WP_002965401.1">
    <property type="nucleotide sequence ID" value="NZ_KN046823.1"/>
</dbReference>
<dbReference type="SMR" id="Q2YP18"/>
<dbReference type="STRING" id="359391.BAB1_0152"/>
<dbReference type="KEGG" id="bmf:BAB1_0152"/>
<dbReference type="PATRIC" id="fig|359391.11.peg.1575"/>
<dbReference type="HOGENOM" id="CLU_105066_2_0_5"/>
<dbReference type="Proteomes" id="UP000002719">
    <property type="component" value="Chromosome I"/>
</dbReference>
<dbReference type="GO" id="GO:0005694">
    <property type="term" value="C:chromosome"/>
    <property type="evidence" value="ECO:0007669"/>
    <property type="project" value="InterPro"/>
</dbReference>
<dbReference type="GO" id="GO:0005829">
    <property type="term" value="C:cytosol"/>
    <property type="evidence" value="ECO:0007669"/>
    <property type="project" value="TreeGrafter"/>
</dbReference>
<dbReference type="GO" id="GO:0003677">
    <property type="term" value="F:DNA binding"/>
    <property type="evidence" value="ECO:0007669"/>
    <property type="project" value="UniProtKB-UniRule"/>
</dbReference>
<dbReference type="GO" id="GO:0030527">
    <property type="term" value="F:structural constituent of chromatin"/>
    <property type="evidence" value="ECO:0007669"/>
    <property type="project" value="InterPro"/>
</dbReference>
<dbReference type="GO" id="GO:0006310">
    <property type="term" value="P:DNA recombination"/>
    <property type="evidence" value="ECO:0007669"/>
    <property type="project" value="UniProtKB-UniRule"/>
</dbReference>
<dbReference type="GO" id="GO:0006355">
    <property type="term" value="P:regulation of DNA-templated transcription"/>
    <property type="evidence" value="ECO:0007669"/>
    <property type="project" value="UniProtKB-UniRule"/>
</dbReference>
<dbReference type="GO" id="GO:0006417">
    <property type="term" value="P:regulation of translation"/>
    <property type="evidence" value="ECO:0007669"/>
    <property type="project" value="UniProtKB-UniRule"/>
</dbReference>
<dbReference type="CDD" id="cd13836">
    <property type="entry name" value="IHF_B"/>
    <property type="match status" value="1"/>
</dbReference>
<dbReference type="Gene3D" id="4.10.520.10">
    <property type="entry name" value="IHF-like DNA-binding proteins"/>
    <property type="match status" value="1"/>
</dbReference>
<dbReference type="HAMAP" id="MF_00381">
    <property type="entry name" value="IHF_beta"/>
    <property type="match status" value="1"/>
</dbReference>
<dbReference type="InterPro" id="IPR000119">
    <property type="entry name" value="Hist_DNA-bd"/>
</dbReference>
<dbReference type="InterPro" id="IPR020816">
    <property type="entry name" value="Histone-like_DNA-bd_CS"/>
</dbReference>
<dbReference type="InterPro" id="IPR010992">
    <property type="entry name" value="IHF-like_DNA-bd_dom_sf"/>
</dbReference>
<dbReference type="InterPro" id="IPR005685">
    <property type="entry name" value="IHF_beta"/>
</dbReference>
<dbReference type="NCBIfam" id="TIGR00988">
    <property type="entry name" value="hip"/>
    <property type="match status" value="1"/>
</dbReference>
<dbReference type="NCBIfam" id="NF001222">
    <property type="entry name" value="PRK00199.1"/>
    <property type="match status" value="1"/>
</dbReference>
<dbReference type="PANTHER" id="PTHR33175">
    <property type="entry name" value="DNA-BINDING PROTEIN HU"/>
    <property type="match status" value="1"/>
</dbReference>
<dbReference type="PANTHER" id="PTHR33175:SF5">
    <property type="entry name" value="INTEGRATION HOST FACTOR SUBUNIT BETA"/>
    <property type="match status" value="1"/>
</dbReference>
<dbReference type="Pfam" id="PF00216">
    <property type="entry name" value="Bac_DNA_binding"/>
    <property type="match status" value="1"/>
</dbReference>
<dbReference type="PRINTS" id="PR01727">
    <property type="entry name" value="DNABINDINGHU"/>
</dbReference>
<dbReference type="SMART" id="SM00411">
    <property type="entry name" value="BHL"/>
    <property type="match status" value="1"/>
</dbReference>
<dbReference type="SUPFAM" id="SSF47729">
    <property type="entry name" value="IHF-like DNA-binding proteins"/>
    <property type="match status" value="1"/>
</dbReference>
<dbReference type="PROSITE" id="PS00045">
    <property type="entry name" value="HISTONE_LIKE"/>
    <property type="match status" value="1"/>
</dbReference>
<evidence type="ECO:0000255" key="1">
    <source>
        <dbReference type="HAMAP-Rule" id="MF_00381"/>
    </source>
</evidence>
<sequence length="94" mass="10566">MIKSELVQIIASRNPHLFQRDVENIVGAVFDEITNALAEGNRVELRGFGAFSVKNRPARSGRNPRTGETVDVEEKWVPFFKTGKKLRDRLNGAV</sequence>
<feature type="chain" id="PRO_1000060589" description="Integration host factor subunit beta">
    <location>
        <begin position="1"/>
        <end position="94"/>
    </location>
</feature>
<comment type="function">
    <text evidence="1">This protein is one of the two subunits of integration host factor, a specific DNA-binding protein that functions in genetic recombination as well as in transcriptional and translational control.</text>
</comment>
<comment type="subunit">
    <text evidence="1">Heterodimer of an alpha and a beta chain.</text>
</comment>
<comment type="similarity">
    <text evidence="1">Belongs to the bacterial histone-like protein family.</text>
</comment>
<reference key="1">
    <citation type="journal article" date="2005" name="Infect. Immun.">
        <title>Whole-genome analyses of speciation events in pathogenic Brucellae.</title>
        <authorList>
            <person name="Chain P.S."/>
            <person name="Comerci D.J."/>
            <person name="Tolmasky M.E."/>
            <person name="Larimer F.W."/>
            <person name="Malfatti S.A."/>
            <person name="Vergez L.M."/>
            <person name="Aguero F."/>
            <person name="Land M.L."/>
            <person name="Ugalde R.A."/>
            <person name="Garcia E."/>
        </authorList>
    </citation>
    <scope>NUCLEOTIDE SEQUENCE [LARGE SCALE GENOMIC DNA]</scope>
    <source>
        <strain>2308</strain>
    </source>
</reference>
<keyword id="KW-0233">DNA recombination</keyword>
<keyword id="KW-0238">DNA-binding</keyword>
<keyword id="KW-1185">Reference proteome</keyword>
<keyword id="KW-0804">Transcription</keyword>
<keyword id="KW-0805">Transcription regulation</keyword>
<keyword id="KW-0810">Translation regulation</keyword>